<accession>Q83MM7</accession>
<comment type="function">
    <text evidence="1">Part of the Tol-Pal system, which plays a role in outer membrane invagination during cell division and is important for maintaining outer membrane integrity. TolB occupies a key intermediary position in the Tol-Pal system because it communicates directly with both membrane-embedded components, Pal in the outer membrane and TolA in the inner membrane.</text>
</comment>
<comment type="subunit">
    <text evidence="1">The Tol-Pal system is composed of five core proteins: the inner membrane proteins TolA, TolQ and TolR, the periplasmic protein TolB and the outer membrane protein Pal. They form a network linking the inner and outer membranes and the peptidoglycan layer.</text>
</comment>
<comment type="subcellular location">
    <subcellularLocation>
        <location evidence="1">Periplasm</location>
    </subcellularLocation>
</comment>
<comment type="similarity">
    <text evidence="1 2">Belongs to the TolB family.</text>
</comment>
<evidence type="ECO:0000255" key="1">
    <source>
        <dbReference type="HAMAP-Rule" id="MF_00671"/>
    </source>
</evidence>
<evidence type="ECO:0000305" key="2"/>
<feature type="signal peptide" evidence="1">
    <location>
        <begin position="1"/>
        <end position="21"/>
    </location>
</feature>
<feature type="chain" id="PRO_0000034687" description="Tol-Pal system protein TolB" evidence="1">
    <location>
        <begin position="22"/>
        <end position="430"/>
    </location>
</feature>
<feature type="sequence conflict" description="In Ref. 2; AAP16074." evidence="2" ref="2">
    <original>H</original>
    <variation>Q</variation>
    <location>
        <position position="200"/>
    </location>
</feature>
<feature type="sequence conflict" description="In Ref. 2; AAP16074." evidence="2" ref="2">
    <original>L</original>
    <variation>Q</variation>
    <location>
        <position position="308"/>
    </location>
</feature>
<sequence>MKQALRVAFGFLILWASVLHAEVRIVIDSGVDSGRPIGVVPFQWAGPGAAPEDIGGIVAADLRNSGKFNPLDRARLPQQPGSAQEVQPAAWSALGIDAVVVGQVTPNPDGSYNVAYQLVDTGGAPGTVLAQNSYKVNKQWLRYAGHTASDEVFEKLTGIKGAFRTRIAYVVQTNGGQFPYELRVSDYDGYNQFVVHRSPHPLMSPAWSPDGSKLAYVTFESGRSALVIQTLANGAVRQVASFPRHNGAPAFSPDGSKLAFALSKTGSLNLYVMDLASGQIRQVTDGRSNNTEPTWFPDSQNLAFTSDLAGRPQVYKVNINGGAPQRITWEGSQNQDADVSSDGKFMVMVSSNGGQQHIAKQDLATGGVQVLSSTFLDETPSLAPNGTMVIYSSSQGMGSVLNLVSTDGRFKARLPATDGQVKFPAWSPYL</sequence>
<protein>
    <recommendedName>
        <fullName evidence="1">Tol-Pal system protein TolB</fullName>
    </recommendedName>
</protein>
<proteinExistence type="inferred from homology"/>
<dbReference type="EMBL" id="AE005674">
    <property type="protein sequence ID" value="AAN42201.2"/>
    <property type="molecule type" value="Genomic_DNA"/>
</dbReference>
<dbReference type="EMBL" id="AE014073">
    <property type="protein sequence ID" value="AAP16074.1"/>
    <property type="molecule type" value="Genomic_DNA"/>
</dbReference>
<dbReference type="RefSeq" id="NP_706494.2">
    <property type="nucleotide sequence ID" value="NC_004337.2"/>
</dbReference>
<dbReference type="RefSeq" id="WP_011069275.1">
    <property type="nucleotide sequence ID" value="NZ_CP123365.1"/>
</dbReference>
<dbReference type="SMR" id="Q83MM7"/>
<dbReference type="STRING" id="198214.SF0557"/>
<dbReference type="PaxDb" id="198214-SF0557"/>
<dbReference type="GeneID" id="1023467"/>
<dbReference type="KEGG" id="sfl:SF0557"/>
<dbReference type="KEGG" id="sfx:S0570"/>
<dbReference type="PATRIC" id="fig|198214.7.peg.646"/>
<dbReference type="HOGENOM" id="CLU_047123_0_0_6"/>
<dbReference type="Proteomes" id="UP000001006">
    <property type="component" value="Chromosome"/>
</dbReference>
<dbReference type="Proteomes" id="UP000002673">
    <property type="component" value="Chromosome"/>
</dbReference>
<dbReference type="GO" id="GO:0042597">
    <property type="term" value="C:periplasmic space"/>
    <property type="evidence" value="ECO:0007669"/>
    <property type="project" value="UniProtKB-SubCell"/>
</dbReference>
<dbReference type="GO" id="GO:0051301">
    <property type="term" value="P:cell division"/>
    <property type="evidence" value="ECO:0007669"/>
    <property type="project" value="UniProtKB-UniRule"/>
</dbReference>
<dbReference type="GO" id="GO:0017038">
    <property type="term" value="P:protein import"/>
    <property type="evidence" value="ECO:0007669"/>
    <property type="project" value="InterPro"/>
</dbReference>
<dbReference type="FunFam" id="2.120.10.30:FF:000022">
    <property type="entry name" value="Tol-Pal system protein TolB"/>
    <property type="match status" value="1"/>
</dbReference>
<dbReference type="FunFam" id="3.40.50.10070:FF:000001">
    <property type="entry name" value="Tol-Pal system protein TolB"/>
    <property type="match status" value="1"/>
</dbReference>
<dbReference type="Gene3D" id="2.120.10.30">
    <property type="entry name" value="TolB, C-terminal domain"/>
    <property type="match status" value="1"/>
</dbReference>
<dbReference type="Gene3D" id="3.40.50.10070">
    <property type="entry name" value="TolB, N-terminal domain"/>
    <property type="match status" value="1"/>
</dbReference>
<dbReference type="HAMAP" id="MF_00671">
    <property type="entry name" value="TolB"/>
    <property type="match status" value="1"/>
</dbReference>
<dbReference type="InterPro" id="IPR011042">
    <property type="entry name" value="6-blade_b-propeller_TolB-like"/>
</dbReference>
<dbReference type="InterPro" id="IPR011659">
    <property type="entry name" value="PD40"/>
</dbReference>
<dbReference type="InterPro" id="IPR014167">
    <property type="entry name" value="Tol-Pal_TolB"/>
</dbReference>
<dbReference type="InterPro" id="IPR007195">
    <property type="entry name" value="TolB_N"/>
</dbReference>
<dbReference type="NCBIfam" id="TIGR02800">
    <property type="entry name" value="propeller_TolB"/>
    <property type="match status" value="1"/>
</dbReference>
<dbReference type="PANTHER" id="PTHR36842:SF1">
    <property type="entry name" value="PROTEIN TOLB"/>
    <property type="match status" value="1"/>
</dbReference>
<dbReference type="PANTHER" id="PTHR36842">
    <property type="entry name" value="PROTEIN TOLB HOMOLOG"/>
    <property type="match status" value="1"/>
</dbReference>
<dbReference type="Pfam" id="PF07676">
    <property type="entry name" value="PD40"/>
    <property type="match status" value="4"/>
</dbReference>
<dbReference type="Pfam" id="PF04052">
    <property type="entry name" value="TolB_N"/>
    <property type="match status" value="1"/>
</dbReference>
<dbReference type="SUPFAM" id="SSF52964">
    <property type="entry name" value="TolB, N-terminal domain"/>
    <property type="match status" value="1"/>
</dbReference>
<dbReference type="SUPFAM" id="SSF69304">
    <property type="entry name" value="Tricorn protease N-terminal domain"/>
    <property type="match status" value="1"/>
</dbReference>
<keyword id="KW-0131">Cell cycle</keyword>
<keyword id="KW-0132">Cell division</keyword>
<keyword id="KW-0574">Periplasm</keyword>
<keyword id="KW-1185">Reference proteome</keyword>
<keyword id="KW-0732">Signal</keyword>
<name>TOLB_SHIFL</name>
<reference key="1">
    <citation type="journal article" date="2002" name="Nucleic Acids Res.">
        <title>Genome sequence of Shigella flexneri 2a: insights into pathogenicity through comparison with genomes of Escherichia coli K12 and O157.</title>
        <authorList>
            <person name="Jin Q."/>
            <person name="Yuan Z."/>
            <person name="Xu J."/>
            <person name="Wang Y."/>
            <person name="Shen Y."/>
            <person name="Lu W."/>
            <person name="Wang J."/>
            <person name="Liu H."/>
            <person name="Yang J."/>
            <person name="Yang F."/>
            <person name="Zhang X."/>
            <person name="Zhang J."/>
            <person name="Yang G."/>
            <person name="Wu H."/>
            <person name="Qu D."/>
            <person name="Dong J."/>
            <person name="Sun L."/>
            <person name="Xue Y."/>
            <person name="Zhao A."/>
            <person name="Gao Y."/>
            <person name="Zhu J."/>
            <person name="Kan B."/>
            <person name="Ding K."/>
            <person name="Chen S."/>
            <person name="Cheng H."/>
            <person name="Yao Z."/>
            <person name="He B."/>
            <person name="Chen R."/>
            <person name="Ma D."/>
            <person name="Qiang B."/>
            <person name="Wen Y."/>
            <person name="Hou Y."/>
            <person name="Yu J."/>
        </authorList>
    </citation>
    <scope>NUCLEOTIDE SEQUENCE [LARGE SCALE GENOMIC DNA]</scope>
    <source>
        <strain>301 / Serotype 2a</strain>
    </source>
</reference>
<reference key="2">
    <citation type="journal article" date="2003" name="Infect. Immun.">
        <title>Complete genome sequence and comparative genomics of Shigella flexneri serotype 2a strain 2457T.</title>
        <authorList>
            <person name="Wei J."/>
            <person name="Goldberg M.B."/>
            <person name="Burland V."/>
            <person name="Venkatesan M.M."/>
            <person name="Deng W."/>
            <person name="Fournier G."/>
            <person name="Mayhew G.F."/>
            <person name="Plunkett G. III"/>
            <person name="Rose D.J."/>
            <person name="Darling A."/>
            <person name="Mau B."/>
            <person name="Perna N.T."/>
            <person name="Payne S.M."/>
            <person name="Runyen-Janecky L.J."/>
            <person name="Zhou S."/>
            <person name="Schwartz D.C."/>
            <person name="Blattner F.R."/>
        </authorList>
    </citation>
    <scope>NUCLEOTIDE SEQUENCE [LARGE SCALE GENOMIC DNA]</scope>
    <source>
        <strain>ATCC 700930 / 2457T / Serotype 2a</strain>
    </source>
</reference>
<gene>
    <name evidence="1" type="primary">tolB</name>
    <name type="ordered locus">SF0557</name>
    <name type="ordered locus">S0570</name>
</gene>
<organism>
    <name type="scientific">Shigella flexneri</name>
    <dbReference type="NCBI Taxonomy" id="623"/>
    <lineage>
        <taxon>Bacteria</taxon>
        <taxon>Pseudomonadati</taxon>
        <taxon>Pseudomonadota</taxon>
        <taxon>Gammaproteobacteria</taxon>
        <taxon>Enterobacterales</taxon>
        <taxon>Enterobacteriaceae</taxon>
        <taxon>Shigella</taxon>
    </lineage>
</organism>